<gene>
    <name evidence="1" type="primary">rpsR2</name>
    <name type="ordered locus">NFA_49780</name>
</gene>
<protein>
    <recommendedName>
        <fullName evidence="1">Small ribosomal subunit protein bS18B</fullName>
    </recommendedName>
    <alternativeName>
        <fullName evidence="3">30S ribosomal protein S18 2</fullName>
    </alternativeName>
</protein>
<comment type="function">
    <text evidence="1">Binds as a heterodimer with protein bS6 to the central domain of the 16S rRNA, where it helps stabilize the platform of the 30S subunit.</text>
</comment>
<comment type="subunit">
    <text evidence="1">Part of the 30S ribosomal subunit. Forms a tight heterodimer with protein bS6.</text>
</comment>
<comment type="similarity">
    <text evidence="1">Belongs to the bacterial ribosomal protein bS18 family.</text>
</comment>
<dbReference type="EMBL" id="AP006618">
    <property type="protein sequence ID" value="BAD59830.1"/>
    <property type="molecule type" value="Genomic_DNA"/>
</dbReference>
<dbReference type="SMR" id="Q5YPR1"/>
<dbReference type="STRING" id="247156.NFA_49780"/>
<dbReference type="KEGG" id="nfa:NFA_49780"/>
<dbReference type="eggNOG" id="COG0238">
    <property type="taxonomic scope" value="Bacteria"/>
</dbReference>
<dbReference type="HOGENOM" id="CLU_148710_1_0_11"/>
<dbReference type="OrthoDB" id="9812008at2"/>
<dbReference type="Proteomes" id="UP000006820">
    <property type="component" value="Chromosome"/>
</dbReference>
<dbReference type="GO" id="GO:0022627">
    <property type="term" value="C:cytosolic small ribosomal subunit"/>
    <property type="evidence" value="ECO:0007669"/>
    <property type="project" value="TreeGrafter"/>
</dbReference>
<dbReference type="GO" id="GO:0070181">
    <property type="term" value="F:small ribosomal subunit rRNA binding"/>
    <property type="evidence" value="ECO:0007669"/>
    <property type="project" value="TreeGrafter"/>
</dbReference>
<dbReference type="GO" id="GO:0003735">
    <property type="term" value="F:structural constituent of ribosome"/>
    <property type="evidence" value="ECO:0007669"/>
    <property type="project" value="InterPro"/>
</dbReference>
<dbReference type="GO" id="GO:0006412">
    <property type="term" value="P:translation"/>
    <property type="evidence" value="ECO:0007669"/>
    <property type="project" value="UniProtKB-UniRule"/>
</dbReference>
<dbReference type="FunFam" id="4.10.640.10:FF:000016">
    <property type="entry name" value="30S ribosomal protein S18"/>
    <property type="match status" value="1"/>
</dbReference>
<dbReference type="Gene3D" id="4.10.640.10">
    <property type="entry name" value="Ribosomal protein S18"/>
    <property type="match status" value="1"/>
</dbReference>
<dbReference type="HAMAP" id="MF_00270">
    <property type="entry name" value="Ribosomal_bS18"/>
    <property type="match status" value="1"/>
</dbReference>
<dbReference type="InterPro" id="IPR001648">
    <property type="entry name" value="Ribosomal_bS18"/>
</dbReference>
<dbReference type="InterPro" id="IPR018275">
    <property type="entry name" value="Ribosomal_bS18_CS"/>
</dbReference>
<dbReference type="InterPro" id="IPR036870">
    <property type="entry name" value="Ribosomal_bS18_sf"/>
</dbReference>
<dbReference type="NCBIfam" id="TIGR00165">
    <property type="entry name" value="S18"/>
    <property type="match status" value="1"/>
</dbReference>
<dbReference type="PANTHER" id="PTHR13479">
    <property type="entry name" value="30S RIBOSOMAL PROTEIN S18"/>
    <property type="match status" value="1"/>
</dbReference>
<dbReference type="PANTHER" id="PTHR13479:SF40">
    <property type="entry name" value="SMALL RIBOSOMAL SUBUNIT PROTEIN BS18M"/>
    <property type="match status" value="1"/>
</dbReference>
<dbReference type="Pfam" id="PF01084">
    <property type="entry name" value="Ribosomal_S18"/>
    <property type="match status" value="1"/>
</dbReference>
<dbReference type="PRINTS" id="PR00974">
    <property type="entry name" value="RIBOSOMALS18"/>
</dbReference>
<dbReference type="SUPFAM" id="SSF46911">
    <property type="entry name" value="Ribosomal protein S18"/>
    <property type="match status" value="1"/>
</dbReference>
<dbReference type="PROSITE" id="PS00057">
    <property type="entry name" value="RIBOSOMAL_S18"/>
    <property type="match status" value="1"/>
</dbReference>
<reference key="1">
    <citation type="journal article" date="2004" name="Proc. Natl. Acad. Sci. U.S.A.">
        <title>The complete genomic sequence of Nocardia farcinica IFM 10152.</title>
        <authorList>
            <person name="Ishikawa J."/>
            <person name="Yamashita A."/>
            <person name="Mikami Y."/>
            <person name="Hoshino Y."/>
            <person name="Kurita H."/>
            <person name="Hotta K."/>
            <person name="Shiba T."/>
            <person name="Hattori M."/>
        </authorList>
    </citation>
    <scope>NUCLEOTIDE SEQUENCE [LARGE SCALE GENOMIC DNA]</scope>
    <source>
        <strain>IFM 10152</strain>
    </source>
</reference>
<organism>
    <name type="scientific">Nocardia farcinica (strain IFM 10152)</name>
    <dbReference type="NCBI Taxonomy" id="247156"/>
    <lineage>
        <taxon>Bacteria</taxon>
        <taxon>Bacillati</taxon>
        <taxon>Actinomycetota</taxon>
        <taxon>Actinomycetes</taxon>
        <taxon>Mycobacteriales</taxon>
        <taxon>Nocardiaceae</taxon>
        <taxon>Nocardia</taxon>
    </lineage>
</organism>
<keyword id="KW-1185">Reference proteome</keyword>
<keyword id="KW-0687">Ribonucleoprotein</keyword>
<keyword id="KW-0689">Ribosomal protein</keyword>
<keyword id="KW-0694">RNA-binding</keyword>
<keyword id="KW-0699">rRNA-binding</keyword>
<proteinExistence type="inferred from homology"/>
<sequence length="84" mass="9499">MAVKRAPSKKVRAEQARRPKKNPLIAAGIETVDYKDVNLLRTFISDRGKIRSRRVTGLTPQQQRQVAVAVKNAREMALLPFTSR</sequence>
<evidence type="ECO:0000255" key="1">
    <source>
        <dbReference type="HAMAP-Rule" id="MF_00270"/>
    </source>
</evidence>
<evidence type="ECO:0000256" key="2">
    <source>
        <dbReference type="SAM" id="MobiDB-lite"/>
    </source>
</evidence>
<evidence type="ECO:0000305" key="3"/>
<accession>Q5YPR1</accession>
<feature type="chain" id="PRO_0000111197" description="Small ribosomal subunit protein bS18B">
    <location>
        <begin position="1"/>
        <end position="84"/>
    </location>
</feature>
<feature type="region of interest" description="Disordered" evidence="2">
    <location>
        <begin position="1"/>
        <end position="20"/>
    </location>
</feature>
<feature type="compositionally biased region" description="Basic residues" evidence="2">
    <location>
        <begin position="1"/>
        <end position="10"/>
    </location>
</feature>
<name>RS182_NOCFA</name>